<sequence length="182" mass="20570">MVASIAGEEEPAAEKSQQSPDHFQPYRPYYYPPYRGYPITYPYPYPHGYPKPYHNFQTIAKPNEGPTDQPEANSANSIEEGGVSKRLFIEPIFNLFRPRPRDPIVVNQAPPPPPVIYQAPPPPPPPPIFQQAPPTIYQQPSPTIIQQAPQPSVTKLVYSQPEPSHSVIYQTQPKTELVYLNQ</sequence>
<feature type="signal peptide" evidence="2">
    <location>
        <begin position="1"/>
        <end position="7"/>
    </location>
</feature>
<feature type="chain" id="PRO_0000022388" description="Spermatophorin SP23">
    <location>
        <begin position="8"/>
        <end position="182"/>
    </location>
</feature>
<feature type="region of interest" description="Disordered" evidence="1">
    <location>
        <begin position="1"/>
        <end position="26"/>
    </location>
</feature>
<feature type="region of interest" description="Disordered" evidence="1">
    <location>
        <begin position="56"/>
        <end position="79"/>
    </location>
</feature>
<feature type="region of interest" description="Disordered" evidence="1">
    <location>
        <begin position="104"/>
        <end position="136"/>
    </location>
</feature>
<feature type="compositionally biased region" description="Pro residues" evidence="1">
    <location>
        <begin position="109"/>
        <end position="128"/>
    </location>
</feature>
<feature type="sequence conflict" description="In Ref. 2; AAC47422." evidence="3" ref="2">
    <original>K</original>
    <variation>R</variation>
    <location>
        <position position="61"/>
    </location>
</feature>
<feature type="sequence conflict" description="In Ref. 2; AAC47422." evidence="3" ref="2">
    <original>P</original>
    <variation>A</variation>
    <location>
        <position position="110"/>
    </location>
</feature>
<feature type="sequence conflict" description="In Ref. 2." evidence="3" ref="2">
    <location>
        <position position="127"/>
    </location>
</feature>
<dbReference type="EMBL" id="M92928">
    <property type="protein sequence ID" value="AAA18165.1"/>
    <property type="molecule type" value="mRNA"/>
</dbReference>
<dbReference type="EMBL" id="U39658">
    <property type="protein sequence ID" value="AAC47422.1"/>
    <property type="molecule type" value="Genomic_DNA"/>
</dbReference>
<dbReference type="PIR" id="A44157">
    <property type="entry name" value="A44157"/>
</dbReference>
<dbReference type="PIR" id="JC5233">
    <property type="entry name" value="JC5233"/>
</dbReference>
<dbReference type="SMR" id="Q27022"/>
<dbReference type="GO" id="GO:0005576">
    <property type="term" value="C:extracellular region"/>
    <property type="evidence" value="ECO:0007669"/>
    <property type="project" value="UniProtKB-SubCell"/>
</dbReference>
<reference key="1">
    <citation type="journal article" date="1992" name="J. Biol. Chem.">
        <title>Amino acid sequence of Sp23, a structural protein of the spermatophore of the mealworm beetle, Tenebrio molitor.</title>
        <authorList>
            <person name="Paesen G.C."/>
            <person name="Schwartz M.B."/>
            <person name="Peferoen M."/>
            <person name="Weyda F."/>
            <person name="Happ G.M."/>
        </authorList>
    </citation>
    <scope>NUCLEOTIDE SEQUENCE [MRNA]</scope>
    <scope>PROTEIN SEQUENCE OF 8-20</scope>
    <source>
        <tissue>Bean-shaped accessory gland</tissue>
    </source>
</reference>
<reference key="2">
    <citation type="journal article" date="1996" name="Gene">
        <title>Isolation and sequencing of the gene encoding Sp23, a structural protein of spermatophore of the mealworm beetle, Tenebrio molitor.</title>
        <authorList>
            <person name="Feng X."/>
            <person name="Happ G.M."/>
        </authorList>
    </citation>
    <scope>NUCLEOTIDE SEQUENCE [GENOMIC DNA]</scope>
</reference>
<organism>
    <name type="scientific">Tenebrio molitor</name>
    <name type="common">Yellow mealworm beetle</name>
    <dbReference type="NCBI Taxonomy" id="7067"/>
    <lineage>
        <taxon>Eukaryota</taxon>
        <taxon>Metazoa</taxon>
        <taxon>Ecdysozoa</taxon>
        <taxon>Arthropoda</taxon>
        <taxon>Hexapoda</taxon>
        <taxon>Insecta</taxon>
        <taxon>Pterygota</taxon>
        <taxon>Neoptera</taxon>
        <taxon>Endopterygota</taxon>
        <taxon>Coleoptera</taxon>
        <taxon>Polyphaga</taxon>
        <taxon>Cucujiformia</taxon>
        <taxon>Tenebrionidae</taxon>
        <taxon>Tenebrio</taxon>
    </lineage>
</organism>
<keyword id="KW-0903">Direct protein sequencing</keyword>
<keyword id="KW-0677">Repeat</keyword>
<keyword id="KW-0964">Secreted</keyword>
<keyword id="KW-0732">Signal</keyword>
<gene>
    <name type="primary">SP23</name>
</gene>
<name>SP23_TENMO</name>
<evidence type="ECO:0000256" key="1">
    <source>
        <dbReference type="SAM" id="MobiDB-lite"/>
    </source>
</evidence>
<evidence type="ECO:0000269" key="2">
    <source>
    </source>
</evidence>
<evidence type="ECO:0000305" key="3"/>
<proteinExistence type="evidence at protein level"/>
<accession>Q27022</accession>
<accession>Q27012</accession>
<comment type="function">
    <text>Structural protein of a layer within the wall of the spermatophore produced probably by cell type 4 of the bean-shaped gland (BAG). Fixation in the spermatophore seems to require covalent cross-linking of spermatophorins.</text>
</comment>
<comment type="subcellular location">
    <subcellularLocation>
        <location>Secreted</location>
    </subcellularLocation>
</comment>
<comment type="tissue specificity">
    <text>Spermatophore.</text>
</comment>
<comment type="developmental stage">
    <text>Expressed at the beginning of the adult stage, about four days after the pupal peak of ecdysteroids.</text>
</comment>
<protein>
    <recommendedName>
        <fullName>Spermatophorin SP23</fullName>
    </recommendedName>
</protein>